<protein>
    <recommendedName>
        <fullName>Uncharacterized RNA methyltransferase GSU1452</fullName>
        <ecNumber>2.1.1.-</ecNumber>
    </recommendedName>
</protein>
<evidence type="ECO:0000250" key="1"/>
<evidence type="ECO:0000255" key="2">
    <source>
        <dbReference type="PROSITE-ProRule" id="PRU00208"/>
    </source>
</evidence>
<evidence type="ECO:0000255" key="3">
    <source>
        <dbReference type="PROSITE-ProRule" id="PRU01024"/>
    </source>
</evidence>
<evidence type="ECO:0000256" key="4">
    <source>
        <dbReference type="SAM" id="MobiDB-lite"/>
    </source>
</evidence>
<keyword id="KW-0004">4Fe-4S</keyword>
<keyword id="KW-0408">Iron</keyword>
<keyword id="KW-0411">Iron-sulfur</keyword>
<keyword id="KW-0479">Metal-binding</keyword>
<keyword id="KW-0489">Methyltransferase</keyword>
<keyword id="KW-1185">Reference proteome</keyword>
<keyword id="KW-0949">S-adenosyl-L-methionine</keyword>
<keyword id="KW-0808">Transferase</keyword>
<dbReference type="EC" id="2.1.1.-"/>
<dbReference type="EMBL" id="AE017180">
    <property type="protein sequence ID" value="AAR34826.1"/>
    <property type="molecule type" value="Genomic_DNA"/>
</dbReference>
<dbReference type="RefSeq" id="NP_952503.1">
    <property type="nucleotide sequence ID" value="NC_002939.5"/>
</dbReference>
<dbReference type="SMR" id="Q74D67"/>
<dbReference type="FunCoup" id="Q74D67">
    <property type="interactions" value="62"/>
</dbReference>
<dbReference type="STRING" id="243231.GSU1452"/>
<dbReference type="EnsemblBacteria" id="AAR34826">
    <property type="protein sequence ID" value="AAR34826"/>
    <property type="gene ID" value="GSU1452"/>
</dbReference>
<dbReference type="KEGG" id="gsu:GSU1452"/>
<dbReference type="PATRIC" id="fig|243231.5.peg.1498"/>
<dbReference type="eggNOG" id="COG2265">
    <property type="taxonomic scope" value="Bacteria"/>
</dbReference>
<dbReference type="HOGENOM" id="CLU_014689_7_0_7"/>
<dbReference type="InParanoid" id="Q74D67"/>
<dbReference type="OrthoDB" id="9804590at2"/>
<dbReference type="Proteomes" id="UP000000577">
    <property type="component" value="Chromosome"/>
</dbReference>
<dbReference type="GO" id="GO:0051539">
    <property type="term" value="F:4 iron, 4 sulfur cluster binding"/>
    <property type="evidence" value="ECO:0007669"/>
    <property type="project" value="UniProtKB-KW"/>
</dbReference>
<dbReference type="GO" id="GO:0046872">
    <property type="term" value="F:metal ion binding"/>
    <property type="evidence" value="ECO:0007669"/>
    <property type="project" value="UniProtKB-KW"/>
</dbReference>
<dbReference type="GO" id="GO:0070041">
    <property type="term" value="F:rRNA (uridine-C5-)-methyltransferase activity"/>
    <property type="evidence" value="ECO:0000318"/>
    <property type="project" value="GO_Central"/>
</dbReference>
<dbReference type="GO" id="GO:0070475">
    <property type="term" value="P:rRNA base methylation"/>
    <property type="evidence" value="ECO:0000318"/>
    <property type="project" value="GO_Central"/>
</dbReference>
<dbReference type="CDD" id="cd02440">
    <property type="entry name" value="AdoMet_MTases"/>
    <property type="match status" value="1"/>
</dbReference>
<dbReference type="FunFam" id="3.40.50.150:FF:000009">
    <property type="entry name" value="23S rRNA (Uracil(1939)-C(5))-methyltransferase RlmD"/>
    <property type="match status" value="1"/>
</dbReference>
<dbReference type="FunFam" id="2.40.50.1070:FF:000003">
    <property type="entry name" value="23S rRNA (Uracil-5-)-methyltransferase RumA"/>
    <property type="match status" value="1"/>
</dbReference>
<dbReference type="Gene3D" id="2.40.50.1070">
    <property type="match status" value="1"/>
</dbReference>
<dbReference type="Gene3D" id="2.40.50.140">
    <property type="entry name" value="Nucleic acid-binding proteins"/>
    <property type="match status" value="1"/>
</dbReference>
<dbReference type="Gene3D" id="3.40.50.150">
    <property type="entry name" value="Vaccinia Virus protein VP39"/>
    <property type="match status" value="1"/>
</dbReference>
<dbReference type="InterPro" id="IPR030390">
    <property type="entry name" value="MeTrfase_TrmA_AS"/>
</dbReference>
<dbReference type="InterPro" id="IPR030391">
    <property type="entry name" value="MeTrfase_TrmA_CS"/>
</dbReference>
<dbReference type="InterPro" id="IPR012340">
    <property type="entry name" value="NA-bd_OB-fold"/>
</dbReference>
<dbReference type="InterPro" id="IPR029063">
    <property type="entry name" value="SAM-dependent_MTases_sf"/>
</dbReference>
<dbReference type="InterPro" id="IPR002792">
    <property type="entry name" value="TRAM_dom"/>
</dbReference>
<dbReference type="InterPro" id="IPR010280">
    <property type="entry name" value="U5_MeTrfase_fam"/>
</dbReference>
<dbReference type="NCBIfam" id="TIGR00479">
    <property type="entry name" value="rumA"/>
    <property type="match status" value="1"/>
</dbReference>
<dbReference type="PANTHER" id="PTHR11061">
    <property type="entry name" value="RNA M5U METHYLTRANSFERASE"/>
    <property type="match status" value="1"/>
</dbReference>
<dbReference type="PANTHER" id="PTHR11061:SF30">
    <property type="entry name" value="TRNA (URACIL(54)-C(5))-METHYLTRANSFERASE"/>
    <property type="match status" value="1"/>
</dbReference>
<dbReference type="Pfam" id="PF01938">
    <property type="entry name" value="TRAM"/>
    <property type="match status" value="1"/>
</dbReference>
<dbReference type="Pfam" id="PF05958">
    <property type="entry name" value="tRNA_U5-meth_tr"/>
    <property type="match status" value="1"/>
</dbReference>
<dbReference type="SUPFAM" id="SSF50249">
    <property type="entry name" value="Nucleic acid-binding proteins"/>
    <property type="match status" value="1"/>
</dbReference>
<dbReference type="SUPFAM" id="SSF53335">
    <property type="entry name" value="S-adenosyl-L-methionine-dependent methyltransferases"/>
    <property type="match status" value="1"/>
</dbReference>
<dbReference type="PROSITE" id="PS51687">
    <property type="entry name" value="SAM_MT_RNA_M5U"/>
    <property type="match status" value="1"/>
</dbReference>
<dbReference type="PROSITE" id="PS50926">
    <property type="entry name" value="TRAM"/>
    <property type="match status" value="1"/>
</dbReference>
<dbReference type="PROSITE" id="PS01230">
    <property type="entry name" value="TRMA_1"/>
    <property type="match status" value="1"/>
</dbReference>
<dbReference type="PROSITE" id="PS01231">
    <property type="entry name" value="TRMA_2"/>
    <property type="match status" value="1"/>
</dbReference>
<name>Y1452_GEOSL</name>
<proteinExistence type="inferred from homology"/>
<comment type="similarity">
    <text evidence="3">Belongs to the class I-like SAM-binding methyltransferase superfamily. RNA M5U methyltransferase family.</text>
</comment>
<feature type="chain" id="PRO_0000161981" description="Uncharacterized RNA methyltransferase GSU1452">
    <location>
        <begin position="1"/>
        <end position="495"/>
    </location>
</feature>
<feature type="domain" description="TRAM" evidence="2">
    <location>
        <begin position="16"/>
        <end position="74"/>
    </location>
</feature>
<feature type="region of interest" description="Disordered" evidence="4">
    <location>
        <begin position="472"/>
        <end position="495"/>
    </location>
</feature>
<feature type="compositionally biased region" description="Basic and acidic residues" evidence="4">
    <location>
        <begin position="472"/>
        <end position="483"/>
    </location>
</feature>
<feature type="compositionally biased region" description="Basic residues" evidence="4">
    <location>
        <begin position="484"/>
        <end position="495"/>
    </location>
</feature>
<feature type="active site" description="Nucleophile" evidence="3">
    <location>
        <position position="424"/>
    </location>
</feature>
<feature type="binding site" evidence="1">
    <location>
        <position position="88"/>
    </location>
    <ligand>
        <name>[4Fe-4S] cluster</name>
        <dbReference type="ChEBI" id="CHEBI:49883"/>
    </ligand>
</feature>
<feature type="binding site" evidence="1">
    <location>
        <position position="94"/>
    </location>
    <ligand>
        <name>[4Fe-4S] cluster</name>
        <dbReference type="ChEBI" id="CHEBI:49883"/>
    </ligand>
</feature>
<feature type="binding site" evidence="1">
    <location>
        <position position="97"/>
    </location>
    <ligand>
        <name>[4Fe-4S] cluster</name>
        <dbReference type="ChEBI" id="CHEBI:49883"/>
    </ligand>
</feature>
<feature type="binding site" evidence="1">
    <location>
        <position position="175"/>
    </location>
    <ligand>
        <name>[4Fe-4S] cluster</name>
        <dbReference type="ChEBI" id="CHEBI:49883"/>
    </ligand>
</feature>
<feature type="binding site" evidence="3">
    <location>
        <position position="299"/>
    </location>
    <ligand>
        <name>S-adenosyl-L-methionine</name>
        <dbReference type="ChEBI" id="CHEBI:59789"/>
    </ligand>
</feature>
<feature type="binding site" evidence="3">
    <location>
        <position position="328"/>
    </location>
    <ligand>
        <name>S-adenosyl-L-methionine</name>
        <dbReference type="ChEBI" id="CHEBI:59789"/>
    </ligand>
</feature>
<feature type="binding site" evidence="3">
    <location>
        <position position="349"/>
    </location>
    <ligand>
        <name>S-adenosyl-L-methionine</name>
        <dbReference type="ChEBI" id="CHEBI:59789"/>
    </ligand>
</feature>
<feature type="binding site" evidence="3">
    <location>
        <position position="397"/>
    </location>
    <ligand>
        <name>S-adenosyl-L-methionine</name>
        <dbReference type="ChEBI" id="CHEBI:59789"/>
    </ligand>
</feature>
<accession>Q74D67</accession>
<sequence length="495" mass="54206">MNKKRSPKTVLAAGPSSKRGDLIELAVTALDEDGNGIGTHDGTNVHVIGALPDERVRARLTHVGKRHLHAEAVEVLTPSRARLAQPSCKRAGSCDGCPLIVMHYPDQLNWKRTFTERQIRRYQTLGAAEVLATLPSPNQLHYRNSAKLVVSGTFRRPVIGIYRRNSHQVMDIGTCPLHHPLINRVVTAVKEGIAKCKVQVYNPRTGSGLLRYLVVRISERTGTAMAVFVTVERNYNEIHHLAKHLQQSVPQVEVVVQNVNSSEGNVILGQRDYFLTRQHALTEELGGIRFTISPRSFFQVNSGGARIIYETVRQWSSLTGKESVVDLYCGIGGIALFLAGTAREVHGIEVVEAAVNDAESNARLNRIHNCSFEAGDAAELIEELVEEGERLDLVVLNPPRKGCDAGVLNKVAAAGPARIVYVSCAPATLARDLDILAGLGYATLRVQPVDMFPQTPHVENIALLVKKLPRNDRLESPAKERSRPRASHKAKGGAV</sequence>
<organism>
    <name type="scientific">Geobacter sulfurreducens (strain ATCC 51573 / DSM 12127 / PCA)</name>
    <dbReference type="NCBI Taxonomy" id="243231"/>
    <lineage>
        <taxon>Bacteria</taxon>
        <taxon>Pseudomonadati</taxon>
        <taxon>Thermodesulfobacteriota</taxon>
        <taxon>Desulfuromonadia</taxon>
        <taxon>Geobacterales</taxon>
        <taxon>Geobacteraceae</taxon>
        <taxon>Geobacter</taxon>
    </lineage>
</organism>
<gene>
    <name type="ordered locus">GSU1452</name>
</gene>
<reference key="1">
    <citation type="journal article" date="2003" name="Science">
        <title>Genome of Geobacter sulfurreducens: metal reduction in subsurface environments.</title>
        <authorList>
            <person name="Methe B.A."/>
            <person name="Nelson K.E."/>
            <person name="Eisen J.A."/>
            <person name="Paulsen I.T."/>
            <person name="Nelson W.C."/>
            <person name="Heidelberg J.F."/>
            <person name="Wu D."/>
            <person name="Wu M."/>
            <person name="Ward N.L."/>
            <person name="Beanan M.J."/>
            <person name="Dodson R.J."/>
            <person name="Madupu R."/>
            <person name="Brinkac L.M."/>
            <person name="Daugherty S.C."/>
            <person name="DeBoy R.T."/>
            <person name="Durkin A.S."/>
            <person name="Gwinn M.L."/>
            <person name="Kolonay J.F."/>
            <person name="Sullivan S.A."/>
            <person name="Haft D.H."/>
            <person name="Selengut J."/>
            <person name="Davidsen T.M."/>
            <person name="Zafar N."/>
            <person name="White O."/>
            <person name="Tran B."/>
            <person name="Romero C."/>
            <person name="Forberger H.A."/>
            <person name="Weidman J.F."/>
            <person name="Khouri H.M."/>
            <person name="Feldblyum T.V."/>
            <person name="Utterback T.R."/>
            <person name="Van Aken S.E."/>
            <person name="Lovley D.R."/>
            <person name="Fraser C.M."/>
        </authorList>
    </citation>
    <scope>NUCLEOTIDE SEQUENCE [LARGE SCALE GENOMIC DNA]</scope>
    <source>
        <strain>ATCC 51573 / DSM 12127 / PCA</strain>
    </source>
</reference>